<comment type="function">
    <text evidence="3">Inhibitor of serine proteases chymotrypsin, papain and trypsin. Has strong antifungal activity against C.albicans and R.solani. Has antibacterial activity against the Gram-positive bacterium C.michiganense, but lacks antibacterial activity against the Gram-positive bacterium S.aureus. Lacks hemolytic activity against human erythrocytes.</text>
</comment>
<comment type="mass spectrometry" mass="5600.0" method="MALDI" evidence="3"/>
<comment type="similarity">
    <text evidence="2">Belongs to the protease inhibitor I20 (potato type II proteinase inhibitor) family.</text>
</comment>
<sequence length="47" mass="4833">DICTNCCAGTKGCNTTSANGAFICEGQSDPKKPKACPLNCDPHIAYA</sequence>
<organism>
    <name type="scientific">Solanum tuberosum</name>
    <name type="common">Potato</name>
    <dbReference type="NCBI Taxonomy" id="4113"/>
    <lineage>
        <taxon>Eukaryota</taxon>
        <taxon>Viridiplantae</taxon>
        <taxon>Streptophyta</taxon>
        <taxon>Embryophyta</taxon>
        <taxon>Tracheophyta</taxon>
        <taxon>Spermatophyta</taxon>
        <taxon>Magnoliopsida</taxon>
        <taxon>eudicotyledons</taxon>
        <taxon>Gunneridae</taxon>
        <taxon>Pentapetalae</taxon>
        <taxon>asterids</taxon>
        <taxon>lamiids</taxon>
        <taxon>Solanales</taxon>
        <taxon>Solanaceae</taxon>
        <taxon>Solanoideae</taxon>
        <taxon>Solaneae</taxon>
        <taxon>Solanum</taxon>
    </lineage>
</organism>
<name>POTM1_SOLTU</name>
<keyword id="KW-0044">Antibiotic</keyword>
<keyword id="KW-0929">Antimicrobial</keyword>
<keyword id="KW-0903">Direct protein sequencing</keyword>
<keyword id="KW-1015">Disulfide bond</keyword>
<keyword id="KW-0295">Fungicide</keyword>
<keyword id="KW-0646">Protease inhibitor</keyword>
<keyword id="KW-1185">Reference proteome</keyword>
<keyword id="KW-0677">Repeat</keyword>
<keyword id="KW-0722">Serine protease inhibitor</keyword>
<evidence type="ECO:0000250" key="1">
    <source>
        <dbReference type="UniProtKB" id="P05119"/>
    </source>
</evidence>
<evidence type="ECO:0000255" key="2"/>
<evidence type="ECO:0000269" key="3">
    <source>
    </source>
</evidence>
<evidence type="ECO:0000303" key="4">
    <source>
    </source>
</evidence>
<evidence type="ECO:0000305" key="5"/>
<feature type="chain" id="PRO_0000253944" description="Potamin-1">
    <location>
        <begin position="1"/>
        <end position="47" status="greater than"/>
    </location>
</feature>
<feature type="site" description="Reactive bond for chymotrypsin" evidence="1">
    <location>
        <begin position="38"/>
        <end position="39"/>
    </location>
</feature>
<feature type="disulfide bond" evidence="1">
    <location>
        <begin position="3"/>
        <end position="40"/>
    </location>
</feature>
<feature type="disulfide bond" evidence="1">
    <location>
        <begin position="6"/>
        <end position="24"/>
    </location>
</feature>
<feature type="disulfide bond" evidence="1">
    <location>
        <begin position="7"/>
        <end position="36"/>
    </location>
</feature>
<feature type="disulfide bond" evidence="1">
    <location>
        <begin position="13"/>
        <end status="unknown"/>
    </location>
</feature>
<feature type="non-terminal residue" evidence="4">
    <location>
        <position position="47"/>
    </location>
</feature>
<accession>P84813</accession>
<proteinExistence type="evidence at protein level"/>
<dbReference type="SMR" id="P84813"/>
<dbReference type="STRING" id="4113.P84813"/>
<dbReference type="InParanoid" id="P84813"/>
<dbReference type="Proteomes" id="UP000011115">
    <property type="component" value="Unassembled WGS sequence"/>
</dbReference>
<dbReference type="ExpressionAtlas" id="P84813">
    <property type="expression patterns" value="baseline and differential"/>
</dbReference>
<dbReference type="GO" id="GO:0004867">
    <property type="term" value="F:serine-type endopeptidase inhibitor activity"/>
    <property type="evidence" value="ECO:0000314"/>
    <property type="project" value="UniProtKB"/>
</dbReference>
<dbReference type="GO" id="GO:0050832">
    <property type="term" value="P:defense response to fungus"/>
    <property type="evidence" value="ECO:0000314"/>
    <property type="project" value="UniProtKB"/>
</dbReference>
<dbReference type="GO" id="GO:0050830">
    <property type="term" value="P:defense response to Gram-positive bacterium"/>
    <property type="evidence" value="ECO:0000314"/>
    <property type="project" value="UniProtKB"/>
</dbReference>
<dbReference type="GO" id="GO:0031640">
    <property type="term" value="P:killing of cells of another organism"/>
    <property type="evidence" value="ECO:0007669"/>
    <property type="project" value="UniProtKB-KW"/>
</dbReference>
<dbReference type="FunFam" id="3.30.60.30:FF:000196">
    <property type="entry name" value="Potamin-1"/>
    <property type="match status" value="1"/>
</dbReference>
<dbReference type="Gene3D" id="3.30.60.30">
    <property type="match status" value="1"/>
</dbReference>
<dbReference type="InterPro" id="IPR003465">
    <property type="entry name" value="Prot_inh_I20"/>
</dbReference>
<dbReference type="InterPro" id="IPR051391">
    <property type="entry name" value="Protease_inhibitor_I20"/>
</dbReference>
<dbReference type="PANTHER" id="PTHR33832:SF23">
    <property type="entry name" value="PROTEINASE INHIBITOR TYPE-2 P303.51"/>
    <property type="match status" value="1"/>
</dbReference>
<dbReference type="PANTHER" id="PTHR33832">
    <property type="entry name" value="SERINE-TYPE ENDOPEPTIDASE INHIBITOR"/>
    <property type="match status" value="1"/>
</dbReference>
<dbReference type="Pfam" id="PF02428">
    <property type="entry name" value="Prot_inhib_II"/>
    <property type="match status" value="1"/>
</dbReference>
<dbReference type="SUPFAM" id="SSF100897">
    <property type="entry name" value="Plant proteinase inhibitors"/>
    <property type="match status" value="1"/>
</dbReference>
<reference evidence="5" key="1">
    <citation type="journal article" date="2005" name="Biochem. Biophys. Res. Commun.">
        <title>Antimicrobial activity studies on a trypsin-chymotrypsin protease inhibitor obtained from potato.</title>
        <authorList>
            <person name="Kim J.-Y."/>
            <person name="Park S.-C."/>
            <person name="Kim M.-H."/>
            <person name="Lim H.-T."/>
            <person name="Park Y."/>
            <person name="Hahm K.-S."/>
        </authorList>
    </citation>
    <scope>PROTEIN SEQUENCE</scope>
    <scope>FUNCTION</scope>
    <scope>MASS SPECTROMETRY</scope>
    <source>
        <strain evidence="3">cv. Gogu</strain>
        <tissue evidence="3">Tuber</tissue>
    </source>
</reference>
<protein>
    <recommendedName>
        <fullName>Potamin-1</fullName>
        <shortName>PT-1</shortName>
    </recommendedName>
</protein>